<dbReference type="EC" id="3.6.1.1" evidence="1"/>
<dbReference type="EMBL" id="CP000560">
    <property type="protein sequence ID" value="ABS75547.1"/>
    <property type="molecule type" value="Genomic_DNA"/>
</dbReference>
<dbReference type="RefSeq" id="WP_012118550.1">
    <property type="nucleotide sequence ID" value="NC_009725.2"/>
</dbReference>
<dbReference type="SMR" id="A7Z971"/>
<dbReference type="GeneID" id="93082362"/>
<dbReference type="KEGG" id="bay:RBAM_032170"/>
<dbReference type="HOGENOM" id="CLU_045011_19_3_9"/>
<dbReference type="Proteomes" id="UP000001120">
    <property type="component" value="Chromosome"/>
</dbReference>
<dbReference type="GO" id="GO:0005829">
    <property type="term" value="C:cytosol"/>
    <property type="evidence" value="ECO:0007669"/>
    <property type="project" value="TreeGrafter"/>
</dbReference>
<dbReference type="GO" id="GO:0004427">
    <property type="term" value="F:inorganic diphosphate phosphatase activity"/>
    <property type="evidence" value="ECO:0007669"/>
    <property type="project" value="UniProtKB-UniRule"/>
</dbReference>
<dbReference type="GO" id="GO:0000287">
    <property type="term" value="F:magnesium ion binding"/>
    <property type="evidence" value="ECO:0007669"/>
    <property type="project" value="UniProtKB-UniRule"/>
</dbReference>
<dbReference type="GO" id="GO:0008967">
    <property type="term" value="F:phosphoglycolate phosphatase activity"/>
    <property type="evidence" value="ECO:0007669"/>
    <property type="project" value="TreeGrafter"/>
</dbReference>
<dbReference type="GO" id="GO:0006281">
    <property type="term" value="P:DNA repair"/>
    <property type="evidence" value="ECO:0007669"/>
    <property type="project" value="TreeGrafter"/>
</dbReference>
<dbReference type="CDD" id="cd02616">
    <property type="entry name" value="HAD_PPase"/>
    <property type="match status" value="1"/>
</dbReference>
<dbReference type="FunFam" id="3.40.50.1000:FF:000022">
    <property type="entry name" value="Phosphoglycolate phosphatase"/>
    <property type="match status" value="1"/>
</dbReference>
<dbReference type="Gene3D" id="3.40.50.1000">
    <property type="entry name" value="HAD superfamily/HAD-like"/>
    <property type="match status" value="1"/>
</dbReference>
<dbReference type="Gene3D" id="1.10.150.240">
    <property type="entry name" value="Putative phosphatase, domain 2"/>
    <property type="match status" value="1"/>
</dbReference>
<dbReference type="HAMAP" id="MF_01250">
    <property type="entry name" value="Pyrophosphat_PpaX"/>
    <property type="match status" value="1"/>
</dbReference>
<dbReference type="InterPro" id="IPR050155">
    <property type="entry name" value="HAD-like_hydrolase_sf"/>
</dbReference>
<dbReference type="InterPro" id="IPR036412">
    <property type="entry name" value="HAD-like_sf"/>
</dbReference>
<dbReference type="InterPro" id="IPR006439">
    <property type="entry name" value="HAD-SF_hydro_IA"/>
</dbReference>
<dbReference type="InterPro" id="IPR041492">
    <property type="entry name" value="HAD_2"/>
</dbReference>
<dbReference type="InterPro" id="IPR023214">
    <property type="entry name" value="HAD_sf"/>
</dbReference>
<dbReference type="InterPro" id="IPR023198">
    <property type="entry name" value="PGP-like_dom2"/>
</dbReference>
<dbReference type="InterPro" id="IPR023733">
    <property type="entry name" value="Pyrophosphatase_Ppax"/>
</dbReference>
<dbReference type="NCBIfam" id="TIGR01549">
    <property type="entry name" value="HAD-SF-IA-v1"/>
    <property type="match status" value="1"/>
</dbReference>
<dbReference type="NCBIfam" id="TIGR01509">
    <property type="entry name" value="HAD-SF-IA-v3"/>
    <property type="match status" value="1"/>
</dbReference>
<dbReference type="NCBIfam" id="NF009804">
    <property type="entry name" value="PRK13288.1"/>
    <property type="match status" value="1"/>
</dbReference>
<dbReference type="PANTHER" id="PTHR43434">
    <property type="entry name" value="PHOSPHOGLYCOLATE PHOSPHATASE"/>
    <property type="match status" value="1"/>
</dbReference>
<dbReference type="PANTHER" id="PTHR43434:SF26">
    <property type="entry name" value="PYROPHOSPHATASE PPAX"/>
    <property type="match status" value="1"/>
</dbReference>
<dbReference type="Pfam" id="PF13419">
    <property type="entry name" value="HAD_2"/>
    <property type="match status" value="1"/>
</dbReference>
<dbReference type="SFLD" id="SFLDG01135">
    <property type="entry name" value="C1.5.6:_HAD__Beta-PGM__Phospha"/>
    <property type="match status" value="1"/>
</dbReference>
<dbReference type="SFLD" id="SFLDG01129">
    <property type="entry name" value="C1.5:_HAD__Beta-PGM__Phosphata"/>
    <property type="match status" value="1"/>
</dbReference>
<dbReference type="SUPFAM" id="SSF56784">
    <property type="entry name" value="HAD-like"/>
    <property type="match status" value="1"/>
</dbReference>
<feature type="chain" id="PRO_1000067186" description="Pyrophosphatase PpaX">
    <location>
        <begin position="1"/>
        <end position="216"/>
    </location>
</feature>
<feature type="active site" description="Nucleophile" evidence="1">
    <location>
        <position position="12"/>
    </location>
</feature>
<protein>
    <recommendedName>
        <fullName evidence="1">Pyrophosphatase PpaX</fullName>
        <ecNumber evidence="1">3.6.1.1</ecNumber>
    </recommendedName>
</protein>
<keyword id="KW-0378">Hydrolase</keyword>
<keyword id="KW-0460">Magnesium</keyword>
<reference key="1">
    <citation type="journal article" date="2007" name="Nat. Biotechnol.">
        <title>Comparative analysis of the complete genome sequence of the plant growth-promoting bacterium Bacillus amyloliquefaciens FZB42.</title>
        <authorList>
            <person name="Chen X.H."/>
            <person name="Koumoutsi A."/>
            <person name="Scholz R."/>
            <person name="Eisenreich A."/>
            <person name="Schneider K."/>
            <person name="Heinemeyer I."/>
            <person name="Morgenstern B."/>
            <person name="Voss B."/>
            <person name="Hess W.R."/>
            <person name="Reva O."/>
            <person name="Junge H."/>
            <person name="Voigt B."/>
            <person name="Jungblut P.R."/>
            <person name="Vater J."/>
            <person name="Suessmuth R."/>
            <person name="Liesegang H."/>
            <person name="Strittmatter A."/>
            <person name="Gottschalk G."/>
            <person name="Borriss R."/>
        </authorList>
    </citation>
    <scope>NUCLEOTIDE SEQUENCE [LARGE SCALE GENOMIC DNA]</scope>
    <source>
        <strain>DSM 23117 / BGSC 10A6 / LMG 26770 / FZB42</strain>
    </source>
</reference>
<organism>
    <name type="scientific">Bacillus velezensis (strain DSM 23117 / BGSC 10A6 / LMG 26770 / FZB42)</name>
    <name type="common">Bacillus amyloliquefaciens subsp. plantarum</name>
    <dbReference type="NCBI Taxonomy" id="326423"/>
    <lineage>
        <taxon>Bacteria</taxon>
        <taxon>Bacillati</taxon>
        <taxon>Bacillota</taxon>
        <taxon>Bacilli</taxon>
        <taxon>Bacillales</taxon>
        <taxon>Bacillaceae</taxon>
        <taxon>Bacillus</taxon>
        <taxon>Bacillus amyloliquefaciens group</taxon>
    </lineage>
</organism>
<comment type="function">
    <text evidence="1">Hydrolyzes pyrophosphate formed during P-Ser-HPr dephosphorylation by HPrK/P. Might play a role in controlling the intracellular pyrophosphate pool.</text>
</comment>
<comment type="catalytic activity">
    <reaction evidence="1">
        <text>diphosphate + H2O = 2 phosphate + H(+)</text>
        <dbReference type="Rhea" id="RHEA:24576"/>
        <dbReference type="ChEBI" id="CHEBI:15377"/>
        <dbReference type="ChEBI" id="CHEBI:15378"/>
        <dbReference type="ChEBI" id="CHEBI:33019"/>
        <dbReference type="ChEBI" id="CHEBI:43474"/>
        <dbReference type="EC" id="3.6.1.1"/>
    </reaction>
</comment>
<comment type="cofactor">
    <cofactor evidence="1">
        <name>Mg(2+)</name>
        <dbReference type="ChEBI" id="CHEBI:18420"/>
    </cofactor>
</comment>
<comment type="similarity">
    <text evidence="1">Belongs to the HAD-like hydrolase superfamily. PpaX family.</text>
</comment>
<sequence length="216" mass="24097">MTDKRVTAILFDLDGTLIDTNELIIASYLHTLDHYCPGQFKREDVLPFIGPPLYETFSGINAEKCDEMISMYRAFNHEKHDELVTEYETVYETLDELKKAGYQLGIVTTKLRDTVNMGLKLTGIGAFFDTVVTLDDVKHPKPDPEPVRLALSRLGCDPSEAIMVGDNYHDVMAGKNAGTKTAGVAWTIKGAQTLSAYEPDYMLEKMSDLLHITGVK</sequence>
<proteinExistence type="inferred from homology"/>
<name>PPAX_BACVZ</name>
<evidence type="ECO:0000255" key="1">
    <source>
        <dbReference type="HAMAP-Rule" id="MF_01250"/>
    </source>
</evidence>
<accession>A7Z971</accession>
<gene>
    <name evidence="1" type="primary">ppaX</name>
    <name type="ordered locus">RBAM_032170</name>
</gene>